<gene>
    <name evidence="1" type="primary">fmt</name>
    <name type="ordered locus">ECA4000</name>
</gene>
<organism>
    <name type="scientific">Pectobacterium atrosepticum (strain SCRI 1043 / ATCC BAA-672)</name>
    <name type="common">Erwinia carotovora subsp. atroseptica</name>
    <dbReference type="NCBI Taxonomy" id="218491"/>
    <lineage>
        <taxon>Bacteria</taxon>
        <taxon>Pseudomonadati</taxon>
        <taxon>Pseudomonadota</taxon>
        <taxon>Gammaproteobacteria</taxon>
        <taxon>Enterobacterales</taxon>
        <taxon>Pectobacteriaceae</taxon>
        <taxon>Pectobacterium</taxon>
    </lineage>
</organism>
<accession>Q6D001</accession>
<protein>
    <recommendedName>
        <fullName evidence="1">Methionyl-tRNA formyltransferase</fullName>
        <ecNumber evidence="1">2.1.2.9</ecNumber>
    </recommendedName>
</protein>
<keyword id="KW-0648">Protein biosynthesis</keyword>
<keyword id="KW-1185">Reference proteome</keyword>
<keyword id="KW-0808">Transferase</keyword>
<feature type="chain" id="PRO_0000082965" description="Methionyl-tRNA formyltransferase">
    <location>
        <begin position="1"/>
        <end position="315"/>
    </location>
</feature>
<feature type="binding site" evidence="1">
    <location>
        <begin position="113"/>
        <end position="116"/>
    </location>
    <ligand>
        <name>(6S)-5,6,7,8-tetrahydrofolate</name>
        <dbReference type="ChEBI" id="CHEBI:57453"/>
    </ligand>
</feature>
<name>FMT_PECAS</name>
<dbReference type="EC" id="2.1.2.9" evidence="1"/>
<dbReference type="EMBL" id="BX950851">
    <property type="protein sequence ID" value="CAG76897.1"/>
    <property type="molecule type" value="Genomic_DNA"/>
</dbReference>
<dbReference type="RefSeq" id="WP_011095494.1">
    <property type="nucleotide sequence ID" value="NC_004547.2"/>
</dbReference>
<dbReference type="SMR" id="Q6D001"/>
<dbReference type="STRING" id="218491.ECA4000"/>
<dbReference type="GeneID" id="57210664"/>
<dbReference type="KEGG" id="eca:ECA4000"/>
<dbReference type="PATRIC" id="fig|218491.5.peg.4066"/>
<dbReference type="eggNOG" id="COG0223">
    <property type="taxonomic scope" value="Bacteria"/>
</dbReference>
<dbReference type="HOGENOM" id="CLU_033347_1_2_6"/>
<dbReference type="OrthoDB" id="9802815at2"/>
<dbReference type="Proteomes" id="UP000007966">
    <property type="component" value="Chromosome"/>
</dbReference>
<dbReference type="GO" id="GO:0005829">
    <property type="term" value="C:cytosol"/>
    <property type="evidence" value="ECO:0007669"/>
    <property type="project" value="TreeGrafter"/>
</dbReference>
<dbReference type="GO" id="GO:0004479">
    <property type="term" value="F:methionyl-tRNA formyltransferase activity"/>
    <property type="evidence" value="ECO:0007669"/>
    <property type="project" value="UniProtKB-UniRule"/>
</dbReference>
<dbReference type="CDD" id="cd08646">
    <property type="entry name" value="FMT_core_Met-tRNA-FMT_N"/>
    <property type="match status" value="1"/>
</dbReference>
<dbReference type="CDD" id="cd08704">
    <property type="entry name" value="Met_tRNA_FMT_C"/>
    <property type="match status" value="1"/>
</dbReference>
<dbReference type="FunFam" id="3.10.25.10:FF:000001">
    <property type="entry name" value="Methionyl-tRNA formyltransferase"/>
    <property type="match status" value="1"/>
</dbReference>
<dbReference type="FunFam" id="3.40.50.12230:FF:000001">
    <property type="entry name" value="Methionyl-tRNA formyltransferase"/>
    <property type="match status" value="1"/>
</dbReference>
<dbReference type="FunFam" id="3.40.50.170:FF:000003">
    <property type="entry name" value="Methionyl-tRNA formyltransferase"/>
    <property type="match status" value="1"/>
</dbReference>
<dbReference type="Gene3D" id="3.10.25.10">
    <property type="entry name" value="Formyl transferase, C-terminal domain"/>
    <property type="match status" value="1"/>
</dbReference>
<dbReference type="Gene3D" id="3.40.50.170">
    <property type="entry name" value="Formyl transferase, N-terminal domain"/>
    <property type="match status" value="1"/>
</dbReference>
<dbReference type="HAMAP" id="MF_00182">
    <property type="entry name" value="Formyl_trans"/>
    <property type="match status" value="1"/>
</dbReference>
<dbReference type="InterPro" id="IPR005794">
    <property type="entry name" value="Fmt"/>
</dbReference>
<dbReference type="InterPro" id="IPR005793">
    <property type="entry name" value="Formyl_trans_C"/>
</dbReference>
<dbReference type="InterPro" id="IPR037022">
    <property type="entry name" value="Formyl_trans_C_sf"/>
</dbReference>
<dbReference type="InterPro" id="IPR002376">
    <property type="entry name" value="Formyl_transf_N"/>
</dbReference>
<dbReference type="InterPro" id="IPR036477">
    <property type="entry name" value="Formyl_transf_N_sf"/>
</dbReference>
<dbReference type="InterPro" id="IPR011034">
    <property type="entry name" value="Formyl_transferase-like_C_sf"/>
</dbReference>
<dbReference type="InterPro" id="IPR001555">
    <property type="entry name" value="GART_AS"/>
</dbReference>
<dbReference type="InterPro" id="IPR044135">
    <property type="entry name" value="Met-tRNA-FMT_C"/>
</dbReference>
<dbReference type="InterPro" id="IPR041711">
    <property type="entry name" value="Met-tRNA-FMT_N"/>
</dbReference>
<dbReference type="NCBIfam" id="TIGR00460">
    <property type="entry name" value="fmt"/>
    <property type="match status" value="1"/>
</dbReference>
<dbReference type="PANTHER" id="PTHR11138">
    <property type="entry name" value="METHIONYL-TRNA FORMYLTRANSFERASE"/>
    <property type="match status" value="1"/>
</dbReference>
<dbReference type="PANTHER" id="PTHR11138:SF5">
    <property type="entry name" value="METHIONYL-TRNA FORMYLTRANSFERASE, MITOCHONDRIAL"/>
    <property type="match status" value="1"/>
</dbReference>
<dbReference type="Pfam" id="PF02911">
    <property type="entry name" value="Formyl_trans_C"/>
    <property type="match status" value="1"/>
</dbReference>
<dbReference type="Pfam" id="PF00551">
    <property type="entry name" value="Formyl_trans_N"/>
    <property type="match status" value="1"/>
</dbReference>
<dbReference type="SUPFAM" id="SSF50486">
    <property type="entry name" value="FMT C-terminal domain-like"/>
    <property type="match status" value="1"/>
</dbReference>
<dbReference type="SUPFAM" id="SSF53328">
    <property type="entry name" value="Formyltransferase"/>
    <property type="match status" value="1"/>
</dbReference>
<dbReference type="PROSITE" id="PS00373">
    <property type="entry name" value="GART"/>
    <property type="match status" value="1"/>
</dbReference>
<comment type="function">
    <text evidence="1">Attaches a formyl group to the free amino group of methionyl-tRNA(fMet). The formyl group appears to play a dual role in the initiator identity of N-formylmethionyl-tRNA by promoting its recognition by IF2 and preventing the misappropriation of this tRNA by the elongation apparatus.</text>
</comment>
<comment type="catalytic activity">
    <reaction evidence="1">
        <text>L-methionyl-tRNA(fMet) + (6R)-10-formyltetrahydrofolate = N-formyl-L-methionyl-tRNA(fMet) + (6S)-5,6,7,8-tetrahydrofolate + H(+)</text>
        <dbReference type="Rhea" id="RHEA:24380"/>
        <dbReference type="Rhea" id="RHEA-COMP:9952"/>
        <dbReference type="Rhea" id="RHEA-COMP:9953"/>
        <dbReference type="ChEBI" id="CHEBI:15378"/>
        <dbReference type="ChEBI" id="CHEBI:57453"/>
        <dbReference type="ChEBI" id="CHEBI:78530"/>
        <dbReference type="ChEBI" id="CHEBI:78844"/>
        <dbReference type="ChEBI" id="CHEBI:195366"/>
        <dbReference type="EC" id="2.1.2.9"/>
    </reaction>
</comment>
<comment type="similarity">
    <text evidence="1">Belongs to the Fmt family.</text>
</comment>
<sequence length="315" mass="34150">MSDSLRIIFAGTPDFAARHLDVLLSSGHEVVGVFTQPDRPAGRGNKLTPSPVKVLAEQHSIPVFQPKSLRPAENQAMVEALDADVMVVVAYGLILPQPVLSMPRLGCINVHGSLLPLWRGAAPIQRALWAGDSETGVTIMQMDVGLDTGAMLHKIACPILPQDTSATLYDKLAALGPRGLLETLERLADSSAVAEAQNDAFATYAEKLSKEEARLNWLLSAEQLERCIRAFNPWPVSYFIVDEQPVKVWKAEVIAKSHGSQPGTILQADKQGIQVAAADGILNIQELQPAGKKVMSAQDLLNSRREWFVPGNTLN</sequence>
<reference key="1">
    <citation type="journal article" date="2004" name="Proc. Natl. Acad. Sci. U.S.A.">
        <title>Genome sequence of the enterobacterial phytopathogen Erwinia carotovora subsp. atroseptica and characterization of virulence factors.</title>
        <authorList>
            <person name="Bell K.S."/>
            <person name="Sebaihia M."/>
            <person name="Pritchard L."/>
            <person name="Holden M.T.G."/>
            <person name="Hyman L.J."/>
            <person name="Holeva M.C."/>
            <person name="Thomson N.R."/>
            <person name="Bentley S.D."/>
            <person name="Churcher L.J.C."/>
            <person name="Mungall K."/>
            <person name="Atkin R."/>
            <person name="Bason N."/>
            <person name="Brooks K."/>
            <person name="Chillingworth T."/>
            <person name="Clark K."/>
            <person name="Doggett J."/>
            <person name="Fraser A."/>
            <person name="Hance Z."/>
            <person name="Hauser H."/>
            <person name="Jagels K."/>
            <person name="Moule S."/>
            <person name="Norbertczak H."/>
            <person name="Ormond D."/>
            <person name="Price C."/>
            <person name="Quail M.A."/>
            <person name="Sanders M."/>
            <person name="Walker D."/>
            <person name="Whitehead S."/>
            <person name="Salmond G.P.C."/>
            <person name="Birch P.R.J."/>
            <person name="Parkhill J."/>
            <person name="Toth I.K."/>
        </authorList>
    </citation>
    <scope>NUCLEOTIDE SEQUENCE [LARGE SCALE GENOMIC DNA]</scope>
    <source>
        <strain>SCRI 1043 / ATCC BAA-672</strain>
    </source>
</reference>
<evidence type="ECO:0000255" key="1">
    <source>
        <dbReference type="HAMAP-Rule" id="MF_00182"/>
    </source>
</evidence>
<proteinExistence type="inferred from homology"/>